<sequence length="298" mass="33836">MTDLHTDVERYLRYLSVERQLSPITLLNYQRQLEAIINFASENGLQSWQQCDVTVVRNFAVRSRRKGLGAASLALRLSALRSFFDWLVSQNELKANPAKGVSAPKAPRHLPKNIDVDDMNRLLDIDINDPLAVRDRAMLEVMYGAGLRLSELVGLDIKHLDLESGEVWVMGKGSKERRLPIGRNAVAWIEHWLDLRDLFGSEDDALFLSKLGKRISARNVQKRFAEWGIKQGLNNHVHPHKLRHSFATHMLESSGDLRGVQELLGHANLSTTQIYTHLDFQHLASVYDAAHPRAKRGK</sequence>
<name>XERC_ECO8A</name>
<protein>
    <recommendedName>
        <fullName evidence="1">Tyrosine recombinase XerC</fullName>
    </recommendedName>
</protein>
<proteinExistence type="inferred from homology"/>
<organism>
    <name type="scientific">Escherichia coli O8 (strain IAI1)</name>
    <dbReference type="NCBI Taxonomy" id="585034"/>
    <lineage>
        <taxon>Bacteria</taxon>
        <taxon>Pseudomonadati</taxon>
        <taxon>Pseudomonadota</taxon>
        <taxon>Gammaproteobacteria</taxon>
        <taxon>Enterobacterales</taxon>
        <taxon>Enterobacteriaceae</taxon>
        <taxon>Escherichia</taxon>
    </lineage>
</organism>
<reference key="1">
    <citation type="journal article" date="2009" name="PLoS Genet.">
        <title>Organised genome dynamics in the Escherichia coli species results in highly diverse adaptive paths.</title>
        <authorList>
            <person name="Touchon M."/>
            <person name="Hoede C."/>
            <person name="Tenaillon O."/>
            <person name="Barbe V."/>
            <person name="Baeriswyl S."/>
            <person name="Bidet P."/>
            <person name="Bingen E."/>
            <person name="Bonacorsi S."/>
            <person name="Bouchier C."/>
            <person name="Bouvet O."/>
            <person name="Calteau A."/>
            <person name="Chiapello H."/>
            <person name="Clermont O."/>
            <person name="Cruveiller S."/>
            <person name="Danchin A."/>
            <person name="Diard M."/>
            <person name="Dossat C."/>
            <person name="Karoui M.E."/>
            <person name="Frapy E."/>
            <person name="Garry L."/>
            <person name="Ghigo J.M."/>
            <person name="Gilles A.M."/>
            <person name="Johnson J."/>
            <person name="Le Bouguenec C."/>
            <person name="Lescat M."/>
            <person name="Mangenot S."/>
            <person name="Martinez-Jehanne V."/>
            <person name="Matic I."/>
            <person name="Nassif X."/>
            <person name="Oztas S."/>
            <person name="Petit M.A."/>
            <person name="Pichon C."/>
            <person name="Rouy Z."/>
            <person name="Ruf C.S."/>
            <person name="Schneider D."/>
            <person name="Tourret J."/>
            <person name="Vacherie B."/>
            <person name="Vallenet D."/>
            <person name="Medigue C."/>
            <person name="Rocha E.P.C."/>
            <person name="Denamur E."/>
        </authorList>
    </citation>
    <scope>NUCLEOTIDE SEQUENCE [LARGE SCALE GENOMIC DNA]</scope>
    <source>
        <strain>IAI1</strain>
    </source>
</reference>
<gene>
    <name evidence="1" type="primary">xerC</name>
    <name type="ordered locus">ECIAI1_4002</name>
</gene>
<accession>B7M613</accession>
<feature type="chain" id="PRO_1000187593" description="Tyrosine recombinase XerC">
    <location>
        <begin position="1"/>
        <end position="298"/>
    </location>
</feature>
<feature type="domain" description="Core-binding (CB)" evidence="3">
    <location>
        <begin position="2"/>
        <end position="88"/>
    </location>
</feature>
<feature type="domain" description="Tyr recombinase" evidence="2">
    <location>
        <begin position="109"/>
        <end position="288"/>
    </location>
</feature>
<feature type="active site" evidence="1">
    <location>
        <position position="148"/>
    </location>
</feature>
<feature type="active site" evidence="1">
    <location>
        <position position="172"/>
    </location>
</feature>
<feature type="active site" evidence="1">
    <location>
        <position position="240"/>
    </location>
</feature>
<feature type="active site" evidence="1">
    <location>
        <position position="243"/>
    </location>
</feature>
<feature type="active site" evidence="1">
    <location>
        <position position="266"/>
    </location>
</feature>
<feature type="active site" description="O-(3'-phospho-DNA)-tyrosine intermediate" evidence="1">
    <location>
        <position position="275"/>
    </location>
</feature>
<dbReference type="EMBL" id="CU928160">
    <property type="protein sequence ID" value="CAR00784.1"/>
    <property type="molecule type" value="Genomic_DNA"/>
</dbReference>
<dbReference type="RefSeq" id="WP_000130701.1">
    <property type="nucleotide sequence ID" value="NC_011741.1"/>
</dbReference>
<dbReference type="SMR" id="B7M613"/>
<dbReference type="GeneID" id="75204804"/>
<dbReference type="KEGG" id="ecr:ECIAI1_4002"/>
<dbReference type="HOGENOM" id="CLU_027562_9_0_6"/>
<dbReference type="GO" id="GO:0005737">
    <property type="term" value="C:cytoplasm"/>
    <property type="evidence" value="ECO:0007669"/>
    <property type="project" value="UniProtKB-SubCell"/>
</dbReference>
<dbReference type="GO" id="GO:0003677">
    <property type="term" value="F:DNA binding"/>
    <property type="evidence" value="ECO:0007669"/>
    <property type="project" value="UniProtKB-KW"/>
</dbReference>
<dbReference type="GO" id="GO:0009037">
    <property type="term" value="F:tyrosine-based site-specific recombinase activity"/>
    <property type="evidence" value="ECO:0007669"/>
    <property type="project" value="UniProtKB-UniRule"/>
</dbReference>
<dbReference type="GO" id="GO:0051301">
    <property type="term" value="P:cell division"/>
    <property type="evidence" value="ECO:0007669"/>
    <property type="project" value="UniProtKB-KW"/>
</dbReference>
<dbReference type="GO" id="GO:0007059">
    <property type="term" value="P:chromosome segregation"/>
    <property type="evidence" value="ECO:0007669"/>
    <property type="project" value="UniProtKB-UniRule"/>
</dbReference>
<dbReference type="GO" id="GO:0006313">
    <property type="term" value="P:DNA transposition"/>
    <property type="evidence" value="ECO:0007669"/>
    <property type="project" value="UniProtKB-UniRule"/>
</dbReference>
<dbReference type="CDD" id="cd00798">
    <property type="entry name" value="INT_XerDC_C"/>
    <property type="match status" value="1"/>
</dbReference>
<dbReference type="FunFam" id="1.10.443.10:FF:000002">
    <property type="entry name" value="Tyrosine recombinase XerC"/>
    <property type="match status" value="1"/>
</dbReference>
<dbReference type="Gene3D" id="1.10.150.130">
    <property type="match status" value="1"/>
</dbReference>
<dbReference type="Gene3D" id="1.10.443.10">
    <property type="entry name" value="Intergrase catalytic core"/>
    <property type="match status" value="1"/>
</dbReference>
<dbReference type="HAMAP" id="MF_01808">
    <property type="entry name" value="Recomb_XerC_XerD"/>
    <property type="match status" value="1"/>
</dbReference>
<dbReference type="InterPro" id="IPR044068">
    <property type="entry name" value="CB"/>
</dbReference>
<dbReference type="InterPro" id="IPR011010">
    <property type="entry name" value="DNA_brk_join_enz"/>
</dbReference>
<dbReference type="InterPro" id="IPR013762">
    <property type="entry name" value="Integrase-like_cat_sf"/>
</dbReference>
<dbReference type="InterPro" id="IPR002104">
    <property type="entry name" value="Integrase_catalytic"/>
</dbReference>
<dbReference type="InterPro" id="IPR010998">
    <property type="entry name" value="Integrase_recombinase_N"/>
</dbReference>
<dbReference type="InterPro" id="IPR004107">
    <property type="entry name" value="Integrase_SAM-like_N"/>
</dbReference>
<dbReference type="InterPro" id="IPR011931">
    <property type="entry name" value="Recomb_XerC"/>
</dbReference>
<dbReference type="InterPro" id="IPR023009">
    <property type="entry name" value="Tyrosine_recombinase_XerC/XerD"/>
</dbReference>
<dbReference type="InterPro" id="IPR050090">
    <property type="entry name" value="Tyrosine_recombinase_XerCD"/>
</dbReference>
<dbReference type="NCBIfam" id="NF001399">
    <property type="entry name" value="PRK00283.1"/>
    <property type="match status" value="1"/>
</dbReference>
<dbReference type="NCBIfam" id="TIGR02224">
    <property type="entry name" value="recomb_XerC"/>
    <property type="match status" value="1"/>
</dbReference>
<dbReference type="PANTHER" id="PTHR30349">
    <property type="entry name" value="PHAGE INTEGRASE-RELATED"/>
    <property type="match status" value="1"/>
</dbReference>
<dbReference type="PANTHER" id="PTHR30349:SF81">
    <property type="entry name" value="TYROSINE RECOMBINASE XERC"/>
    <property type="match status" value="1"/>
</dbReference>
<dbReference type="Pfam" id="PF02899">
    <property type="entry name" value="Phage_int_SAM_1"/>
    <property type="match status" value="1"/>
</dbReference>
<dbReference type="Pfam" id="PF00589">
    <property type="entry name" value="Phage_integrase"/>
    <property type="match status" value="1"/>
</dbReference>
<dbReference type="SUPFAM" id="SSF56349">
    <property type="entry name" value="DNA breaking-rejoining enzymes"/>
    <property type="match status" value="1"/>
</dbReference>
<dbReference type="SUPFAM" id="SSF47823">
    <property type="entry name" value="lambda integrase-like, N-terminal domain"/>
    <property type="match status" value="1"/>
</dbReference>
<dbReference type="PROSITE" id="PS51900">
    <property type="entry name" value="CB"/>
    <property type="match status" value="1"/>
</dbReference>
<dbReference type="PROSITE" id="PS51898">
    <property type="entry name" value="TYR_RECOMBINASE"/>
    <property type="match status" value="1"/>
</dbReference>
<evidence type="ECO:0000255" key="1">
    <source>
        <dbReference type="HAMAP-Rule" id="MF_01808"/>
    </source>
</evidence>
<evidence type="ECO:0000255" key="2">
    <source>
        <dbReference type="PROSITE-ProRule" id="PRU01246"/>
    </source>
</evidence>
<evidence type="ECO:0000255" key="3">
    <source>
        <dbReference type="PROSITE-ProRule" id="PRU01248"/>
    </source>
</evidence>
<keyword id="KW-0131">Cell cycle</keyword>
<keyword id="KW-0132">Cell division</keyword>
<keyword id="KW-0159">Chromosome partition</keyword>
<keyword id="KW-0963">Cytoplasm</keyword>
<keyword id="KW-0229">DNA integration</keyword>
<keyword id="KW-0233">DNA recombination</keyword>
<keyword id="KW-0238">DNA-binding</keyword>
<comment type="function">
    <text evidence="1">Site-specific tyrosine recombinase, which acts by catalyzing the cutting and rejoining of the recombining DNA molecules. Binds cooperatively to specific DNA consensus sequences that are separated from XerD binding sites by a short central region, forming the heterotetrameric XerC-XerD complex that recombines DNA substrates. The complex is essential to convert dimers of the bacterial chromosome into monomers to permit their segregation at cell division. It also contributes to the segregational stability of plasmids. In the complex XerC specifically exchanges the top DNA strands.</text>
</comment>
<comment type="activity regulation">
    <text evidence="1">FtsK may regulate the catalytic switch between XerC and XerD in the heterotetrameric complex during the two steps of the recombination process.</text>
</comment>
<comment type="subunit">
    <text evidence="1">Forms a cyclic heterotetrameric complex composed of two molecules of XerC and two molecules of XerD, in which XerC interacts with XerD via its C-terminal region, XerD interacts with XerC via its C-terminal region and so on.</text>
</comment>
<comment type="subcellular location">
    <subcellularLocation>
        <location evidence="1">Cytoplasm</location>
    </subcellularLocation>
</comment>
<comment type="similarity">
    <text evidence="1">Belongs to the 'phage' integrase family. XerC subfamily.</text>
</comment>